<organism>
    <name type="scientific">Methanosarcina mazei (strain ATCC BAA-159 / DSM 3647 / Goe1 / Go1 / JCM 11833 / OCM 88)</name>
    <name type="common">Methanosarcina frisia</name>
    <dbReference type="NCBI Taxonomy" id="192952"/>
    <lineage>
        <taxon>Archaea</taxon>
        <taxon>Methanobacteriati</taxon>
        <taxon>Methanobacteriota</taxon>
        <taxon>Stenosarchaea group</taxon>
        <taxon>Methanomicrobia</taxon>
        <taxon>Methanosarcinales</taxon>
        <taxon>Methanosarcinaceae</taxon>
        <taxon>Methanosarcina</taxon>
    </lineage>
</organism>
<evidence type="ECO:0000255" key="1">
    <source>
        <dbReference type="HAMAP-Rule" id="MF_00309"/>
    </source>
</evidence>
<evidence type="ECO:0000269" key="2">
    <source>
    </source>
</evidence>
<evidence type="ECO:0000303" key="3">
    <source>
    </source>
</evidence>
<evidence type="ECO:0000305" key="4"/>
<evidence type="ECO:0000305" key="5">
    <source>
    </source>
</evidence>
<comment type="function">
    <text evidence="1">Component of the A-type ATP synthase that produces ATP from ADP in the presence of a proton gradient across the membrane. The A chain is the catalytic subunit.</text>
</comment>
<comment type="catalytic activity">
    <reaction evidence="1">
        <text>ATP + H2O + 4 H(+)(in) = ADP + phosphate + 5 H(+)(out)</text>
        <dbReference type="Rhea" id="RHEA:57720"/>
        <dbReference type="ChEBI" id="CHEBI:15377"/>
        <dbReference type="ChEBI" id="CHEBI:15378"/>
        <dbReference type="ChEBI" id="CHEBI:30616"/>
        <dbReference type="ChEBI" id="CHEBI:43474"/>
        <dbReference type="ChEBI" id="CHEBI:456216"/>
        <dbReference type="EC" id="7.1.2.2"/>
    </reaction>
    <physiologicalReaction direction="right-to-left" evidence="2">
        <dbReference type="Rhea" id="RHEA:57722"/>
    </physiologicalReaction>
</comment>
<comment type="activity regulation">
    <text evidence="2">ATP hydrolysis stimulated by sulfite, ethanol, glycerol, magnesium and zinc ions, inhibited by diethylstilbestrol (DES) and less well by N,N-dicyclohexylcarbodiimide (DCCD).</text>
</comment>
<comment type="biophysicochemical properties">
    <phDependence>
        <text evidence="2">Optimum pH is 5.2 for ATP hydrolysis.</text>
    </phDependence>
</comment>
<comment type="subunit">
    <text evidence="2">Has multiple subunits with at least A(3), B(3), C, D, E, F, G, I and proteolipid K(x).</text>
</comment>
<comment type="subcellular location">
    <subcellularLocation>
        <location evidence="1 2">Cell membrane</location>
        <topology evidence="1">Peripheral membrane protein</topology>
    </subcellularLocation>
</comment>
<comment type="miscellaneous">
    <text evidence="5">This organism has both a Na(+)-translocating F1F0 ATP synthase and this H(+)-translocating A1A0 ATP synthase.</text>
</comment>
<comment type="similarity">
    <text evidence="1">Belongs to the ATPase alpha/beta chains family.</text>
</comment>
<protein>
    <recommendedName>
        <fullName evidence="1">A-type ATP synthase subunit A</fullName>
        <ecNumber evidence="1">7.1.2.2</ecNumber>
    </recommendedName>
    <alternativeName>
        <fullName evidence="3">A1A0 ATPase subunit A</fullName>
    </alternativeName>
</protein>
<sequence length="578" mass="63883">MEVKGEIYRVAGPVVTAIGLDAKMYDLCKVGNEGLMGEVIQIVGDKTIIQVYEETGGVRPGEPCVTTGMSLAVELGPGLLSSIYDGVQRPLHVLLERTGGFIGRGVTADGLDHKKLWEFKPVVKKGDRVIGGDVIGVVQETVNIEHKIMVRPDISGTVADIKSGSFTVVDTICTLTDGTELQMMQRWPVRKPRPVKRKLTPEKPLVTGQRILDGLFPVAKGGTAAIPGPFGSGKTVTQQQLSKWSDTEIVVYIGCGERGNEMADVLWEFPELEDPQTGRPLMERTILVANTSNMPVAAREASVYTGMTLAEYFRDMGYDVSLMADSTSRWAEAMREISSRLEEMPGEEGYPAYLSARLAEFYERAGVAETLCGEKGSITAIGAVSPPGGDFSEPVTQNTLRIVKVFWALDAKLSQKRHFPAINWLNSYSLYKEDLNDWFTENVAPDYVPMRERAMDMLQTESELQEIVQLVGSDALPEEQQLLLEITRMIREIFLQQNAFHPIDTYSPFEKQYKIMKAIMKWGDAAMDALKSGVLSSEILKMQSKDELPKVKFEEDFEGSLNAVLAKMDKEFAALGGK</sequence>
<feature type="chain" id="PRO_0000144598" description="A-type ATP synthase subunit A">
    <location>
        <begin position="1"/>
        <end position="578"/>
    </location>
</feature>
<feature type="binding site" evidence="1">
    <location>
        <begin position="228"/>
        <end position="235"/>
    </location>
    <ligand>
        <name>ATP</name>
        <dbReference type="ChEBI" id="CHEBI:30616"/>
    </ligand>
</feature>
<feature type="sequence conflict" description="In Ref. 1; AAC06375." evidence="4" ref="1">
    <original>V</original>
    <variation>L</variation>
    <location>
        <position position="87"/>
    </location>
</feature>
<feature type="sequence conflict" description="In Ref. 1; AAC06375." evidence="4" ref="1">
    <original>R</original>
    <variation>G</variation>
    <location>
        <position position="128"/>
    </location>
</feature>
<feature type="sequence conflict" description="In Ref. 1; AAC06375." evidence="4" ref="1">
    <original>VR</original>
    <variation>LP</variation>
    <location>
        <begin position="150"/>
        <end position="151"/>
    </location>
</feature>
<feature type="sequence conflict" description="In Ref. 1; AAC06375." evidence="4" ref="1">
    <original>A</original>
    <variation>S</variation>
    <location>
        <position position="159"/>
    </location>
</feature>
<feature type="sequence conflict" description="In Ref. 1; AAC06375." evidence="4" ref="1">
    <original>K</original>
    <variation>R</variation>
    <location>
        <position position="162"/>
    </location>
</feature>
<feature type="sequence conflict" description="In Ref. 1; AAC06375." evidence="4" ref="1">
    <original>DGT</original>
    <variation>EGP</variation>
    <location>
        <begin position="177"/>
        <end position="179"/>
    </location>
</feature>
<feature type="sequence conflict" description="In Ref. 1; AAC06375." evidence="4" ref="1">
    <original>D</original>
    <variation>E</variation>
    <location>
        <position position="274"/>
    </location>
</feature>
<feature type="sequence conflict" description="In Ref. 1; AAC06375." evidence="4" ref="1">
    <original>A</original>
    <variation>P</variation>
    <location>
        <position position="331"/>
    </location>
</feature>
<feature type="sequence conflict" description="In Ref. 1; AAC06375." evidence="4" ref="1">
    <original>L</original>
    <variation>P</variation>
    <location>
        <position position="535"/>
    </location>
</feature>
<feature type="sequence conflict" description="In Ref. 1; AAC06375." evidence="4" ref="1">
    <original>MQ</original>
    <variation>IE</variation>
    <location>
        <begin position="542"/>
        <end position="543"/>
    </location>
</feature>
<feature type="sequence conflict" description="In Ref. 1; AAC06375." evidence="4" ref="1">
    <original>E</original>
    <variation>S</variation>
    <location>
        <position position="547"/>
    </location>
</feature>
<feature type="sequence conflict" description="In Ref. 1; AAC06375." evidence="4" ref="1">
    <original>F</original>
    <variation>Y</variation>
    <location>
        <position position="553"/>
    </location>
</feature>
<feature type="sequence conflict" description="In Ref. 1; AAC06375." evidence="4" ref="1">
    <original>D</original>
    <variation>N</variation>
    <location>
        <position position="556"/>
    </location>
</feature>
<feature type="sequence conflict" description="In Ref. 1; AAC06375." evidence="4" ref="1">
    <original>G</original>
    <variation>D</variation>
    <location>
        <position position="559"/>
    </location>
</feature>
<name>AATA_METMA</name>
<reference key="1">
    <citation type="journal article" date="1996" name="J. Biol. Chem.">
        <title>Subunit structure and organization of the genes of the A1A0 ATPase from the Archaeon Methanosarcina mazei Go1.</title>
        <authorList>
            <person name="Wilms R."/>
            <person name="Freiberg C."/>
            <person name="Wegerle E."/>
            <person name="Meier I."/>
            <person name="Mayer F."/>
            <person name="Mueller V."/>
        </authorList>
    </citation>
    <scope>NUCLEOTIDE SEQUENCE [GENOMIC DNA]</scope>
    <scope>FUNCTION</scope>
    <scope>CATALYTIC ACTIVITY</scope>
    <scope>ACTIVITY REGULATION</scope>
    <scope>BIOPHYSICOCHEMICAL PROPERTIES</scope>
    <scope>SUBUNIT</scope>
    <scope>SUBCELLULAR LOCATION</scope>
    <source>
        <strain>ATCC BAA-159 / DSM 3647 / Goe1 / Go1 / JCM 11833 / OCM 88</strain>
    </source>
</reference>
<reference key="2">
    <citation type="journal article" date="2002" name="J. Mol. Microbiol. Biotechnol.">
        <title>The genome of Methanosarcina mazei: evidence for lateral gene transfer between Bacteria and Archaea.</title>
        <authorList>
            <person name="Deppenmeier U."/>
            <person name="Johann A."/>
            <person name="Hartsch T."/>
            <person name="Merkl R."/>
            <person name="Schmitz R.A."/>
            <person name="Martinez-Arias R."/>
            <person name="Henne A."/>
            <person name="Wiezer A."/>
            <person name="Baeumer S."/>
            <person name="Jacobi C."/>
            <person name="Brueggemann H."/>
            <person name="Lienard T."/>
            <person name="Christmann A."/>
            <person name="Boemecke M."/>
            <person name="Steckel S."/>
            <person name="Bhattacharyya A."/>
            <person name="Lykidis A."/>
            <person name="Overbeek R."/>
            <person name="Klenk H.-P."/>
            <person name="Gunsalus R.P."/>
            <person name="Fritz H.-J."/>
            <person name="Gottschalk G."/>
        </authorList>
    </citation>
    <scope>NUCLEOTIDE SEQUENCE [LARGE SCALE GENOMIC DNA]</scope>
    <source>
        <strain>ATCC BAA-159 / DSM 3647 / Goe1 / Go1 / JCM 11833 / OCM 88</strain>
    </source>
</reference>
<gene>
    <name evidence="1" type="primary">atpA</name>
    <name evidence="3" type="synonym">ahaA</name>
    <name type="ordered locus">MM_0780</name>
</gene>
<dbReference type="EC" id="7.1.2.2" evidence="1"/>
<dbReference type="EMBL" id="U47274">
    <property type="protein sequence ID" value="AAC06375.1"/>
    <property type="molecule type" value="Genomic_DNA"/>
</dbReference>
<dbReference type="EMBL" id="AE008384">
    <property type="protein sequence ID" value="AAM30476.1"/>
    <property type="molecule type" value="Genomic_DNA"/>
</dbReference>
<dbReference type="PIR" id="T45107">
    <property type="entry name" value="T45107"/>
</dbReference>
<dbReference type="RefSeq" id="WP_011032730.1">
    <property type="nucleotide sequence ID" value="NC_003901.1"/>
</dbReference>
<dbReference type="SMR" id="Q60186"/>
<dbReference type="TCDB" id="3.A.2.3.1">
    <property type="family name" value="the h+- or na+-translocating f-type, v-type and a-type atpase (f-atpase) superfamily"/>
</dbReference>
<dbReference type="KEGG" id="mma:MM_0780"/>
<dbReference type="PATRIC" id="fig|192952.21.peg.928"/>
<dbReference type="eggNOG" id="arCOG00868">
    <property type="taxonomic scope" value="Archaea"/>
</dbReference>
<dbReference type="HOGENOM" id="CLU_008162_3_1_2"/>
<dbReference type="Proteomes" id="UP000000595">
    <property type="component" value="Chromosome"/>
</dbReference>
<dbReference type="GO" id="GO:0005886">
    <property type="term" value="C:plasma membrane"/>
    <property type="evidence" value="ECO:0007669"/>
    <property type="project" value="UniProtKB-SubCell"/>
</dbReference>
<dbReference type="GO" id="GO:0033178">
    <property type="term" value="C:proton-transporting two-sector ATPase complex, catalytic domain"/>
    <property type="evidence" value="ECO:0007669"/>
    <property type="project" value="InterPro"/>
</dbReference>
<dbReference type="GO" id="GO:0005524">
    <property type="term" value="F:ATP binding"/>
    <property type="evidence" value="ECO:0007669"/>
    <property type="project" value="UniProtKB-UniRule"/>
</dbReference>
<dbReference type="GO" id="GO:0046933">
    <property type="term" value="F:proton-transporting ATP synthase activity, rotational mechanism"/>
    <property type="evidence" value="ECO:0007669"/>
    <property type="project" value="UniProtKB-UniRule"/>
</dbReference>
<dbReference type="GO" id="GO:0046961">
    <property type="term" value="F:proton-transporting ATPase activity, rotational mechanism"/>
    <property type="evidence" value="ECO:0007669"/>
    <property type="project" value="InterPro"/>
</dbReference>
<dbReference type="GO" id="GO:0042777">
    <property type="term" value="P:proton motive force-driven plasma membrane ATP synthesis"/>
    <property type="evidence" value="ECO:0007669"/>
    <property type="project" value="UniProtKB-UniRule"/>
</dbReference>
<dbReference type="CDD" id="cd18111">
    <property type="entry name" value="ATP-synt_V_A-type_alpha_C"/>
    <property type="match status" value="1"/>
</dbReference>
<dbReference type="CDD" id="cd18119">
    <property type="entry name" value="ATP-synt_V_A-type_alpha_N"/>
    <property type="match status" value="1"/>
</dbReference>
<dbReference type="CDD" id="cd01134">
    <property type="entry name" value="V_A-ATPase_A"/>
    <property type="match status" value="1"/>
</dbReference>
<dbReference type="FunFam" id="3.40.50.300:FF:000675">
    <property type="entry name" value="V-type ATP synthase alpha chain"/>
    <property type="match status" value="1"/>
</dbReference>
<dbReference type="FunFam" id="1.10.1140.10:FF:000002">
    <property type="entry name" value="V-type proton ATPase catalytic subunit A"/>
    <property type="match status" value="1"/>
</dbReference>
<dbReference type="FunFam" id="2.40.50.100:FF:000008">
    <property type="entry name" value="V-type proton ATPase catalytic subunit A"/>
    <property type="match status" value="1"/>
</dbReference>
<dbReference type="Gene3D" id="2.40.30.20">
    <property type="match status" value="1"/>
</dbReference>
<dbReference type="Gene3D" id="2.40.50.100">
    <property type="match status" value="1"/>
</dbReference>
<dbReference type="Gene3D" id="1.10.1140.10">
    <property type="entry name" value="Bovine Mitochondrial F1-atpase, Atp Synthase Beta Chain, Chain D, domain 3"/>
    <property type="match status" value="1"/>
</dbReference>
<dbReference type="Gene3D" id="3.40.50.300">
    <property type="entry name" value="P-loop containing nucleotide triphosphate hydrolases"/>
    <property type="match status" value="1"/>
</dbReference>
<dbReference type="HAMAP" id="MF_00309">
    <property type="entry name" value="ATP_synth_A_arch"/>
    <property type="match status" value="1"/>
</dbReference>
<dbReference type="InterPro" id="IPR055190">
    <property type="entry name" value="ATP-synt_VA_C"/>
</dbReference>
<dbReference type="InterPro" id="IPR031686">
    <property type="entry name" value="ATP-synth_a_Xtn"/>
</dbReference>
<dbReference type="InterPro" id="IPR023366">
    <property type="entry name" value="ATP_synth_asu-like_sf"/>
</dbReference>
<dbReference type="InterPro" id="IPR005726">
    <property type="entry name" value="ATP_synth_asu_arc"/>
</dbReference>
<dbReference type="InterPro" id="IPR020003">
    <property type="entry name" value="ATPase_a/bsu_AS"/>
</dbReference>
<dbReference type="InterPro" id="IPR004100">
    <property type="entry name" value="ATPase_F1/V1/A1_a/bsu_N"/>
</dbReference>
<dbReference type="InterPro" id="IPR036121">
    <property type="entry name" value="ATPase_F1/V1/A1_a/bsu_N_sf"/>
</dbReference>
<dbReference type="InterPro" id="IPR000194">
    <property type="entry name" value="ATPase_F1/V1/A1_a/bsu_nucl-bd"/>
</dbReference>
<dbReference type="InterPro" id="IPR024034">
    <property type="entry name" value="ATPase_F1/V1_b/a_C"/>
</dbReference>
<dbReference type="InterPro" id="IPR027417">
    <property type="entry name" value="P-loop_NTPase"/>
</dbReference>
<dbReference type="InterPro" id="IPR001763">
    <property type="entry name" value="Rhodanese-like_dom"/>
</dbReference>
<dbReference type="InterPro" id="IPR022878">
    <property type="entry name" value="V-ATPase_asu"/>
</dbReference>
<dbReference type="NCBIfam" id="TIGR01043">
    <property type="entry name" value="ATP_syn_A_arch"/>
    <property type="match status" value="1"/>
</dbReference>
<dbReference type="NCBIfam" id="NF003220">
    <property type="entry name" value="PRK04192.1"/>
    <property type="match status" value="1"/>
</dbReference>
<dbReference type="PANTHER" id="PTHR43607:SF1">
    <property type="entry name" value="H(+)-TRANSPORTING TWO-SECTOR ATPASE"/>
    <property type="match status" value="1"/>
</dbReference>
<dbReference type="PANTHER" id="PTHR43607">
    <property type="entry name" value="V-TYPE PROTON ATPASE CATALYTIC SUBUNIT A"/>
    <property type="match status" value="1"/>
</dbReference>
<dbReference type="Pfam" id="PF00006">
    <property type="entry name" value="ATP-synt_ab"/>
    <property type="match status" value="1"/>
</dbReference>
<dbReference type="Pfam" id="PF02874">
    <property type="entry name" value="ATP-synt_ab_N"/>
    <property type="match status" value="1"/>
</dbReference>
<dbReference type="Pfam" id="PF16886">
    <property type="entry name" value="ATP-synt_ab_Xtn"/>
    <property type="match status" value="1"/>
</dbReference>
<dbReference type="Pfam" id="PF22919">
    <property type="entry name" value="ATP-synt_VA_C"/>
    <property type="match status" value="1"/>
</dbReference>
<dbReference type="SUPFAM" id="SSF47917">
    <property type="entry name" value="C-terminal domain of alpha and beta subunits of F1 ATP synthase"/>
    <property type="match status" value="1"/>
</dbReference>
<dbReference type="SUPFAM" id="SSF50615">
    <property type="entry name" value="N-terminal domain of alpha and beta subunits of F1 ATP synthase"/>
    <property type="match status" value="1"/>
</dbReference>
<dbReference type="SUPFAM" id="SSF52540">
    <property type="entry name" value="P-loop containing nucleoside triphosphate hydrolases"/>
    <property type="match status" value="1"/>
</dbReference>
<dbReference type="PROSITE" id="PS00152">
    <property type="entry name" value="ATPASE_ALPHA_BETA"/>
    <property type="match status" value="1"/>
</dbReference>
<accession>Q60186</accession>
<keyword id="KW-0066">ATP synthesis</keyword>
<keyword id="KW-0067">ATP-binding</keyword>
<keyword id="KW-1003">Cell membrane</keyword>
<keyword id="KW-0375">Hydrogen ion transport</keyword>
<keyword id="KW-0406">Ion transport</keyword>
<keyword id="KW-0472">Membrane</keyword>
<keyword id="KW-0547">Nucleotide-binding</keyword>
<keyword id="KW-1278">Translocase</keyword>
<keyword id="KW-0813">Transport</keyword>
<proteinExistence type="evidence at protein level"/>